<protein>
    <recommendedName>
        <fullName evidence="1">Large ribosomal subunit protein uL3</fullName>
    </recommendedName>
    <alternativeName>
        <fullName evidence="2">50S ribosomal protein L3</fullName>
    </alternativeName>
</protein>
<feature type="chain" id="PRO_0000241376" description="Large ribosomal subunit protein uL3">
    <location>
        <begin position="1"/>
        <end position="215"/>
    </location>
</feature>
<feature type="modified residue" description="N5-methylglutamine" evidence="1">
    <location>
        <position position="153"/>
    </location>
</feature>
<sequence length="215" mass="23010">MAIGLIGRKVGMTRVFTDEGASIPVTVIEATPNRISQVKTLEQDGYQAVQVTVGERRPARVTSSLKGHFAKANVEPGRKLQEFRFGAEEGRDIKASGELKVDLFEVGQKVDVTGITRGRGFAGVVRRYHFGGGDASHGNSLSHRAPGSIGQCQTPGRVFKGKKMAGQMGNVRRTVQNLELVRIDEGRQLLLIKGAIPGAPGGDVIVKPAVKTVVK</sequence>
<dbReference type="EMBL" id="CP000127">
    <property type="protein sequence ID" value="ABA58782.1"/>
    <property type="molecule type" value="Genomic_DNA"/>
</dbReference>
<dbReference type="RefSeq" id="WP_002810354.1">
    <property type="nucleotide sequence ID" value="NC_007484.1"/>
</dbReference>
<dbReference type="SMR" id="Q3J8R4"/>
<dbReference type="FunCoup" id="Q3J8R4">
    <property type="interactions" value="682"/>
</dbReference>
<dbReference type="STRING" id="323261.Noc_2324"/>
<dbReference type="KEGG" id="noc:Noc_2324"/>
<dbReference type="eggNOG" id="COG0087">
    <property type="taxonomic scope" value="Bacteria"/>
</dbReference>
<dbReference type="HOGENOM" id="CLU_044142_4_1_6"/>
<dbReference type="InParanoid" id="Q3J8R4"/>
<dbReference type="Proteomes" id="UP000006838">
    <property type="component" value="Chromosome"/>
</dbReference>
<dbReference type="GO" id="GO:0022625">
    <property type="term" value="C:cytosolic large ribosomal subunit"/>
    <property type="evidence" value="ECO:0007669"/>
    <property type="project" value="TreeGrafter"/>
</dbReference>
<dbReference type="GO" id="GO:0019843">
    <property type="term" value="F:rRNA binding"/>
    <property type="evidence" value="ECO:0007669"/>
    <property type="project" value="UniProtKB-UniRule"/>
</dbReference>
<dbReference type="GO" id="GO:0003735">
    <property type="term" value="F:structural constituent of ribosome"/>
    <property type="evidence" value="ECO:0007669"/>
    <property type="project" value="InterPro"/>
</dbReference>
<dbReference type="GO" id="GO:0006412">
    <property type="term" value="P:translation"/>
    <property type="evidence" value="ECO:0007669"/>
    <property type="project" value="UniProtKB-UniRule"/>
</dbReference>
<dbReference type="FunFam" id="2.40.30.10:FF:000004">
    <property type="entry name" value="50S ribosomal protein L3"/>
    <property type="match status" value="1"/>
</dbReference>
<dbReference type="FunFam" id="3.30.160.810:FF:000001">
    <property type="entry name" value="50S ribosomal protein L3"/>
    <property type="match status" value="1"/>
</dbReference>
<dbReference type="Gene3D" id="3.30.160.810">
    <property type="match status" value="1"/>
</dbReference>
<dbReference type="Gene3D" id="2.40.30.10">
    <property type="entry name" value="Translation factors"/>
    <property type="match status" value="1"/>
</dbReference>
<dbReference type="HAMAP" id="MF_01325_B">
    <property type="entry name" value="Ribosomal_uL3_B"/>
    <property type="match status" value="1"/>
</dbReference>
<dbReference type="InterPro" id="IPR000597">
    <property type="entry name" value="Ribosomal_uL3"/>
</dbReference>
<dbReference type="InterPro" id="IPR019927">
    <property type="entry name" value="Ribosomal_uL3_bac/org-type"/>
</dbReference>
<dbReference type="InterPro" id="IPR019926">
    <property type="entry name" value="Ribosomal_uL3_CS"/>
</dbReference>
<dbReference type="InterPro" id="IPR009000">
    <property type="entry name" value="Transl_B-barrel_sf"/>
</dbReference>
<dbReference type="NCBIfam" id="TIGR03625">
    <property type="entry name" value="L3_bact"/>
    <property type="match status" value="1"/>
</dbReference>
<dbReference type="PANTHER" id="PTHR11229">
    <property type="entry name" value="50S RIBOSOMAL PROTEIN L3"/>
    <property type="match status" value="1"/>
</dbReference>
<dbReference type="PANTHER" id="PTHR11229:SF16">
    <property type="entry name" value="LARGE RIBOSOMAL SUBUNIT PROTEIN UL3C"/>
    <property type="match status" value="1"/>
</dbReference>
<dbReference type="Pfam" id="PF00297">
    <property type="entry name" value="Ribosomal_L3"/>
    <property type="match status" value="1"/>
</dbReference>
<dbReference type="SUPFAM" id="SSF50447">
    <property type="entry name" value="Translation proteins"/>
    <property type="match status" value="1"/>
</dbReference>
<dbReference type="PROSITE" id="PS00474">
    <property type="entry name" value="RIBOSOMAL_L3"/>
    <property type="match status" value="1"/>
</dbReference>
<comment type="function">
    <text evidence="1">One of the primary rRNA binding proteins, it binds directly near the 3'-end of the 23S rRNA, where it nucleates assembly of the 50S subunit.</text>
</comment>
<comment type="subunit">
    <text evidence="1">Part of the 50S ribosomal subunit. Forms a cluster with proteins L14 and L19.</text>
</comment>
<comment type="PTM">
    <text evidence="1">Methylated by PrmB.</text>
</comment>
<comment type="similarity">
    <text evidence="1">Belongs to the universal ribosomal protein uL3 family.</text>
</comment>
<keyword id="KW-0488">Methylation</keyword>
<keyword id="KW-1185">Reference proteome</keyword>
<keyword id="KW-0687">Ribonucleoprotein</keyword>
<keyword id="KW-0689">Ribosomal protein</keyword>
<keyword id="KW-0694">RNA-binding</keyword>
<keyword id="KW-0699">rRNA-binding</keyword>
<organism>
    <name type="scientific">Nitrosococcus oceani (strain ATCC 19707 / BCRC 17464 / JCM 30415 / NCIMB 11848 / C-107)</name>
    <dbReference type="NCBI Taxonomy" id="323261"/>
    <lineage>
        <taxon>Bacteria</taxon>
        <taxon>Pseudomonadati</taxon>
        <taxon>Pseudomonadota</taxon>
        <taxon>Gammaproteobacteria</taxon>
        <taxon>Chromatiales</taxon>
        <taxon>Chromatiaceae</taxon>
        <taxon>Nitrosococcus</taxon>
    </lineage>
</organism>
<reference key="1">
    <citation type="journal article" date="2006" name="Appl. Environ. Microbiol.">
        <title>Complete genome sequence of the marine, chemolithoautotrophic, ammonia-oxidizing bacterium Nitrosococcus oceani ATCC 19707.</title>
        <authorList>
            <person name="Klotz M.G."/>
            <person name="Arp D.J."/>
            <person name="Chain P.S.G."/>
            <person name="El-Sheikh A.F."/>
            <person name="Hauser L.J."/>
            <person name="Hommes N.G."/>
            <person name="Larimer F.W."/>
            <person name="Malfatti S.A."/>
            <person name="Norton J.M."/>
            <person name="Poret-Peterson A.T."/>
            <person name="Vergez L.M."/>
            <person name="Ward B.B."/>
        </authorList>
    </citation>
    <scope>NUCLEOTIDE SEQUENCE [LARGE SCALE GENOMIC DNA]</scope>
    <source>
        <strain>ATCC 19707 / BCRC 17464 / JCM 30415 / NCIMB 11848 / C-107</strain>
    </source>
</reference>
<proteinExistence type="inferred from homology"/>
<accession>Q3J8R4</accession>
<gene>
    <name evidence="1" type="primary">rplC</name>
    <name type="ordered locus">Noc_2324</name>
</gene>
<name>RL3_NITOC</name>
<evidence type="ECO:0000255" key="1">
    <source>
        <dbReference type="HAMAP-Rule" id="MF_01325"/>
    </source>
</evidence>
<evidence type="ECO:0000305" key="2"/>